<feature type="signal peptide" evidence="4">
    <location>
        <begin position="1"/>
        <end position="26"/>
    </location>
</feature>
<feature type="chain" id="PRO_0000009131" description="Angiopoietin-related protein 7">
    <location>
        <begin position="27"/>
        <end position="346"/>
    </location>
</feature>
<feature type="domain" description="Fibrinogen C-terminal" evidence="2">
    <location>
        <begin position="122"/>
        <end position="343"/>
    </location>
</feature>
<feature type="coiled-coil region" evidence="1">
    <location>
        <begin position="39"/>
        <end position="119"/>
    </location>
</feature>
<feature type="glycosylation site" description="N-linked (GlcNAc...) asparagine" evidence="1">
    <location>
        <position position="58"/>
    </location>
</feature>
<feature type="glycosylation site" description="N-linked (GlcNAc...) asparagine" evidence="1">
    <location>
        <position position="253"/>
    </location>
</feature>
<feature type="glycosylation site" description="N-linked (GlcNAc...) asparagine" evidence="1">
    <location>
        <position position="267"/>
    </location>
</feature>
<feature type="disulfide bond" evidence="2">
    <location>
        <begin position="131"/>
        <end position="162"/>
    </location>
</feature>
<feature type="disulfide bond" evidence="2">
    <location>
        <begin position="285"/>
        <end position="298"/>
    </location>
</feature>
<feature type="sequence variant" id="VAR_025075" description="In dbSNP:rs28990992." evidence="9">
    <original>E</original>
    <variation>D</variation>
    <location>
        <position position="51"/>
    </location>
</feature>
<feature type="sequence variant" id="VAR_025076" description="In dbSNP:rs28991002." evidence="9">
    <original>R</original>
    <variation>H</variation>
    <location>
        <position position="140"/>
    </location>
</feature>
<feature type="sequence variant" id="VAR_025077" description="In dbSNP:rs28991009." evidence="9">
    <original>Q</original>
    <variation>H</variation>
    <location>
        <position position="175"/>
    </location>
</feature>
<accession>O43827</accession>
<accession>B2R9B2</accession>
<accession>F1T0A6</accession>
<accession>Q4ZGK4</accession>
<proteinExistence type="evidence at protein level"/>
<reference key="1">
    <citation type="journal article" date="1998" name="Invest. Ophthalmol. Vis. Sci.">
        <title>Molecular cloning of a new angiopoietin-like factor from the human cornea.</title>
        <authorList>
            <person name="Peek R."/>
            <person name="van Gelderen B.E."/>
            <person name="Bruinenberg M."/>
            <person name="Kijlstra A."/>
        </authorList>
    </citation>
    <scope>NUCLEOTIDE SEQUENCE [MRNA]</scope>
    <scope>TISSUE SPECIFICITY</scope>
    <source>
        <tissue>Cornea</tissue>
    </source>
</reference>
<reference key="2">
    <citation type="journal article" date="2001" name="Genes Immun.">
        <title>The human gene for mannan-binding lectin-associated serine protease-2 (MASP-2), the effector component of the lectin route of complement activation, is part of a tightly linked gene cluster on chromosome 1p36.2-3.</title>
        <authorList>
            <person name="Stover C."/>
            <person name="Endo Y."/>
            <person name="Takahashi M."/>
            <person name="Lynch N."/>
            <person name="Constantinescu C."/>
            <person name="Vorup-Jensen T."/>
            <person name="Thiel S."/>
            <person name="Friedl H."/>
            <person name="Hankeln T."/>
            <person name="Hall R."/>
            <person name="Gregory S."/>
            <person name="Fujita T."/>
            <person name="Schwaeble W."/>
        </authorList>
    </citation>
    <scope>NUCLEOTIDE SEQUENCE [GENOMIC DNA]</scope>
</reference>
<reference key="3">
    <citation type="journal article" date="2003" name="Genome Res.">
        <title>The secreted protein discovery initiative (SPDI), a large-scale effort to identify novel human secreted and transmembrane proteins: a bioinformatics assessment.</title>
        <authorList>
            <person name="Clark H.F."/>
            <person name="Gurney A.L."/>
            <person name="Abaya E."/>
            <person name="Baker K."/>
            <person name="Baldwin D.T."/>
            <person name="Brush J."/>
            <person name="Chen J."/>
            <person name="Chow B."/>
            <person name="Chui C."/>
            <person name="Crowley C."/>
            <person name="Currell B."/>
            <person name="Deuel B."/>
            <person name="Dowd P."/>
            <person name="Eaton D."/>
            <person name="Foster J.S."/>
            <person name="Grimaldi C."/>
            <person name="Gu Q."/>
            <person name="Hass P.E."/>
            <person name="Heldens S."/>
            <person name="Huang A."/>
            <person name="Kim H.S."/>
            <person name="Klimowski L."/>
            <person name="Jin Y."/>
            <person name="Johnson S."/>
            <person name="Lee J."/>
            <person name="Lewis L."/>
            <person name="Liao D."/>
            <person name="Mark M.R."/>
            <person name="Robbie E."/>
            <person name="Sanchez C."/>
            <person name="Schoenfeld J."/>
            <person name="Seshagiri S."/>
            <person name="Simmons L."/>
            <person name="Singh J."/>
            <person name="Smith V."/>
            <person name="Stinson J."/>
            <person name="Vagts A."/>
            <person name="Vandlen R.L."/>
            <person name="Watanabe C."/>
            <person name="Wieand D."/>
            <person name="Woods K."/>
            <person name="Xie M.-H."/>
            <person name="Yansura D.G."/>
            <person name="Yi S."/>
            <person name="Yu G."/>
            <person name="Yuan J."/>
            <person name="Zhang M."/>
            <person name="Zhang Z."/>
            <person name="Goddard A.D."/>
            <person name="Wood W.I."/>
            <person name="Godowski P.J."/>
            <person name="Gray A.M."/>
        </authorList>
    </citation>
    <scope>NUCLEOTIDE SEQUENCE [LARGE SCALE MRNA]</scope>
</reference>
<reference key="4">
    <citation type="submission" date="2003-08" db="EMBL/GenBank/DDBJ databases">
        <title>Cloning of human full-length CDSs in BD Creator(TM) system donor vector.</title>
        <authorList>
            <person name="Kalnine N."/>
            <person name="Chen X."/>
            <person name="Rolfs A."/>
            <person name="Halleck A."/>
            <person name="Hines L."/>
            <person name="Eisenstein S."/>
            <person name="Koundinya M."/>
            <person name="Raphael J."/>
            <person name="Moreira D."/>
            <person name="Kelley T."/>
            <person name="LaBaer J."/>
            <person name="Lin Y."/>
            <person name="Phelan M."/>
            <person name="Farmer A."/>
        </authorList>
    </citation>
    <scope>NUCLEOTIDE SEQUENCE [LARGE SCALE MRNA]</scope>
</reference>
<reference key="5">
    <citation type="journal article" date="2004" name="Nat. Genet.">
        <title>Complete sequencing and characterization of 21,243 full-length human cDNAs.</title>
        <authorList>
            <person name="Ota T."/>
            <person name="Suzuki Y."/>
            <person name="Nishikawa T."/>
            <person name="Otsuki T."/>
            <person name="Sugiyama T."/>
            <person name="Irie R."/>
            <person name="Wakamatsu A."/>
            <person name="Hayashi K."/>
            <person name="Sato H."/>
            <person name="Nagai K."/>
            <person name="Kimura K."/>
            <person name="Makita H."/>
            <person name="Sekine M."/>
            <person name="Obayashi M."/>
            <person name="Nishi T."/>
            <person name="Shibahara T."/>
            <person name="Tanaka T."/>
            <person name="Ishii S."/>
            <person name="Yamamoto J."/>
            <person name="Saito K."/>
            <person name="Kawai Y."/>
            <person name="Isono Y."/>
            <person name="Nakamura Y."/>
            <person name="Nagahari K."/>
            <person name="Murakami K."/>
            <person name="Yasuda T."/>
            <person name="Iwayanagi T."/>
            <person name="Wagatsuma M."/>
            <person name="Shiratori A."/>
            <person name="Sudo H."/>
            <person name="Hosoiri T."/>
            <person name="Kaku Y."/>
            <person name="Kodaira H."/>
            <person name="Kondo H."/>
            <person name="Sugawara M."/>
            <person name="Takahashi M."/>
            <person name="Kanda K."/>
            <person name="Yokoi T."/>
            <person name="Furuya T."/>
            <person name="Kikkawa E."/>
            <person name="Omura Y."/>
            <person name="Abe K."/>
            <person name="Kamihara K."/>
            <person name="Katsuta N."/>
            <person name="Sato K."/>
            <person name="Tanikawa M."/>
            <person name="Yamazaki M."/>
            <person name="Ninomiya K."/>
            <person name="Ishibashi T."/>
            <person name="Yamashita H."/>
            <person name="Murakawa K."/>
            <person name="Fujimori K."/>
            <person name="Tanai H."/>
            <person name="Kimata M."/>
            <person name="Watanabe M."/>
            <person name="Hiraoka S."/>
            <person name="Chiba Y."/>
            <person name="Ishida S."/>
            <person name="Ono Y."/>
            <person name="Takiguchi S."/>
            <person name="Watanabe S."/>
            <person name="Yosida M."/>
            <person name="Hotuta T."/>
            <person name="Kusano J."/>
            <person name="Kanehori K."/>
            <person name="Takahashi-Fujii A."/>
            <person name="Hara H."/>
            <person name="Tanase T.-O."/>
            <person name="Nomura Y."/>
            <person name="Togiya S."/>
            <person name="Komai F."/>
            <person name="Hara R."/>
            <person name="Takeuchi K."/>
            <person name="Arita M."/>
            <person name="Imose N."/>
            <person name="Musashino K."/>
            <person name="Yuuki H."/>
            <person name="Oshima A."/>
            <person name="Sasaki N."/>
            <person name="Aotsuka S."/>
            <person name="Yoshikawa Y."/>
            <person name="Matsunawa H."/>
            <person name="Ichihara T."/>
            <person name="Shiohata N."/>
            <person name="Sano S."/>
            <person name="Moriya S."/>
            <person name="Momiyama H."/>
            <person name="Satoh N."/>
            <person name="Takami S."/>
            <person name="Terashima Y."/>
            <person name="Suzuki O."/>
            <person name="Nakagawa S."/>
            <person name="Senoh A."/>
            <person name="Mizoguchi H."/>
            <person name="Goto Y."/>
            <person name="Shimizu F."/>
            <person name="Wakebe H."/>
            <person name="Hishigaki H."/>
            <person name="Watanabe T."/>
            <person name="Sugiyama A."/>
            <person name="Takemoto M."/>
            <person name="Kawakami B."/>
            <person name="Yamazaki M."/>
            <person name="Watanabe K."/>
            <person name="Kumagai A."/>
            <person name="Itakura S."/>
            <person name="Fukuzumi Y."/>
            <person name="Fujimori Y."/>
            <person name="Komiyama M."/>
            <person name="Tashiro H."/>
            <person name="Tanigami A."/>
            <person name="Fujiwara T."/>
            <person name="Ono T."/>
            <person name="Yamada K."/>
            <person name="Fujii Y."/>
            <person name="Ozaki K."/>
            <person name="Hirao M."/>
            <person name="Ohmori Y."/>
            <person name="Kawabata A."/>
            <person name="Hikiji T."/>
            <person name="Kobatake N."/>
            <person name="Inagaki H."/>
            <person name="Ikema Y."/>
            <person name="Okamoto S."/>
            <person name="Okitani R."/>
            <person name="Kawakami T."/>
            <person name="Noguchi S."/>
            <person name="Itoh T."/>
            <person name="Shigeta K."/>
            <person name="Senba T."/>
            <person name="Matsumura K."/>
            <person name="Nakajima Y."/>
            <person name="Mizuno T."/>
            <person name="Morinaga M."/>
            <person name="Sasaki M."/>
            <person name="Togashi T."/>
            <person name="Oyama M."/>
            <person name="Hata H."/>
            <person name="Watanabe M."/>
            <person name="Komatsu T."/>
            <person name="Mizushima-Sugano J."/>
            <person name="Satoh T."/>
            <person name="Shirai Y."/>
            <person name="Takahashi Y."/>
            <person name="Nakagawa K."/>
            <person name="Okumura K."/>
            <person name="Nagase T."/>
            <person name="Nomura N."/>
            <person name="Kikuchi H."/>
            <person name="Masuho Y."/>
            <person name="Yamashita R."/>
            <person name="Nakai K."/>
            <person name="Yada T."/>
            <person name="Nakamura Y."/>
            <person name="Ohara O."/>
            <person name="Isogai T."/>
            <person name="Sugano S."/>
        </authorList>
    </citation>
    <scope>NUCLEOTIDE SEQUENCE [LARGE SCALE MRNA]</scope>
</reference>
<reference key="6">
    <citation type="submission" date="2005-04" db="EMBL/GenBank/DDBJ databases">
        <authorList>
            <consortium name="NIEHS SNPs program"/>
        </authorList>
    </citation>
    <scope>NUCLEOTIDE SEQUENCE [GENOMIC DNA]</scope>
    <scope>VARIANTS ASP-51; HIS-140 AND HIS-175</scope>
</reference>
<reference key="7">
    <citation type="journal article" date="2011" name="Invest. Ophthalmol. Vis. Sci.">
        <title>Full-length transcriptome analysis of human retina-derived cell lines ARPE-19 and Y79 using the vector-capping method.</title>
        <authorList>
            <person name="Oshikawa M."/>
            <person name="Tsutsui C."/>
            <person name="Ikegami T."/>
            <person name="Fuchida Y."/>
            <person name="Matsubara M."/>
            <person name="Toyama S."/>
            <person name="Usami R."/>
            <person name="Ohtoko K."/>
            <person name="Kato S."/>
        </authorList>
    </citation>
    <scope>NUCLEOTIDE SEQUENCE [LARGE SCALE MRNA]</scope>
    <source>
        <tissue>Retinoblastoma</tissue>
    </source>
</reference>
<reference key="8">
    <citation type="journal article" date="2006" name="Nature">
        <title>The DNA sequence and biological annotation of human chromosome 1.</title>
        <authorList>
            <person name="Gregory S.G."/>
            <person name="Barlow K.F."/>
            <person name="McLay K.E."/>
            <person name="Kaul R."/>
            <person name="Swarbreck D."/>
            <person name="Dunham A."/>
            <person name="Scott C.E."/>
            <person name="Howe K.L."/>
            <person name="Woodfine K."/>
            <person name="Spencer C.C.A."/>
            <person name="Jones M.C."/>
            <person name="Gillson C."/>
            <person name="Searle S."/>
            <person name="Zhou Y."/>
            <person name="Kokocinski F."/>
            <person name="McDonald L."/>
            <person name="Evans R."/>
            <person name="Phillips K."/>
            <person name="Atkinson A."/>
            <person name="Cooper R."/>
            <person name="Jones C."/>
            <person name="Hall R.E."/>
            <person name="Andrews T.D."/>
            <person name="Lloyd C."/>
            <person name="Ainscough R."/>
            <person name="Almeida J.P."/>
            <person name="Ambrose K.D."/>
            <person name="Anderson F."/>
            <person name="Andrew R.W."/>
            <person name="Ashwell R.I.S."/>
            <person name="Aubin K."/>
            <person name="Babbage A.K."/>
            <person name="Bagguley C.L."/>
            <person name="Bailey J."/>
            <person name="Beasley H."/>
            <person name="Bethel G."/>
            <person name="Bird C.P."/>
            <person name="Bray-Allen S."/>
            <person name="Brown J.Y."/>
            <person name="Brown A.J."/>
            <person name="Buckley D."/>
            <person name="Burton J."/>
            <person name="Bye J."/>
            <person name="Carder C."/>
            <person name="Chapman J.C."/>
            <person name="Clark S.Y."/>
            <person name="Clarke G."/>
            <person name="Clee C."/>
            <person name="Cobley V."/>
            <person name="Collier R.E."/>
            <person name="Corby N."/>
            <person name="Coville G.J."/>
            <person name="Davies J."/>
            <person name="Deadman R."/>
            <person name="Dunn M."/>
            <person name="Earthrowl M."/>
            <person name="Ellington A.G."/>
            <person name="Errington H."/>
            <person name="Frankish A."/>
            <person name="Frankland J."/>
            <person name="French L."/>
            <person name="Garner P."/>
            <person name="Garnett J."/>
            <person name="Gay L."/>
            <person name="Ghori M.R.J."/>
            <person name="Gibson R."/>
            <person name="Gilby L.M."/>
            <person name="Gillett W."/>
            <person name="Glithero R.J."/>
            <person name="Grafham D.V."/>
            <person name="Griffiths C."/>
            <person name="Griffiths-Jones S."/>
            <person name="Grocock R."/>
            <person name="Hammond S."/>
            <person name="Harrison E.S.I."/>
            <person name="Hart E."/>
            <person name="Haugen E."/>
            <person name="Heath P.D."/>
            <person name="Holmes S."/>
            <person name="Holt K."/>
            <person name="Howden P.J."/>
            <person name="Hunt A.R."/>
            <person name="Hunt S.E."/>
            <person name="Hunter G."/>
            <person name="Isherwood J."/>
            <person name="James R."/>
            <person name="Johnson C."/>
            <person name="Johnson D."/>
            <person name="Joy A."/>
            <person name="Kay M."/>
            <person name="Kershaw J.K."/>
            <person name="Kibukawa M."/>
            <person name="Kimberley A.M."/>
            <person name="King A."/>
            <person name="Knights A.J."/>
            <person name="Lad H."/>
            <person name="Laird G."/>
            <person name="Lawlor S."/>
            <person name="Leongamornlert D.A."/>
            <person name="Lloyd D.M."/>
            <person name="Loveland J."/>
            <person name="Lovell J."/>
            <person name="Lush M.J."/>
            <person name="Lyne R."/>
            <person name="Martin S."/>
            <person name="Mashreghi-Mohammadi M."/>
            <person name="Matthews L."/>
            <person name="Matthews N.S.W."/>
            <person name="McLaren S."/>
            <person name="Milne S."/>
            <person name="Mistry S."/>
            <person name="Moore M.J.F."/>
            <person name="Nickerson T."/>
            <person name="O'Dell C.N."/>
            <person name="Oliver K."/>
            <person name="Palmeiri A."/>
            <person name="Palmer S.A."/>
            <person name="Parker A."/>
            <person name="Patel D."/>
            <person name="Pearce A.V."/>
            <person name="Peck A.I."/>
            <person name="Pelan S."/>
            <person name="Phelps K."/>
            <person name="Phillimore B.J."/>
            <person name="Plumb R."/>
            <person name="Rajan J."/>
            <person name="Raymond C."/>
            <person name="Rouse G."/>
            <person name="Saenphimmachak C."/>
            <person name="Sehra H.K."/>
            <person name="Sheridan E."/>
            <person name="Shownkeen R."/>
            <person name="Sims S."/>
            <person name="Skuce C.D."/>
            <person name="Smith M."/>
            <person name="Steward C."/>
            <person name="Subramanian S."/>
            <person name="Sycamore N."/>
            <person name="Tracey A."/>
            <person name="Tromans A."/>
            <person name="Van Helmond Z."/>
            <person name="Wall M."/>
            <person name="Wallis J.M."/>
            <person name="White S."/>
            <person name="Whitehead S.L."/>
            <person name="Wilkinson J.E."/>
            <person name="Willey D.L."/>
            <person name="Williams H."/>
            <person name="Wilming L."/>
            <person name="Wray P.W."/>
            <person name="Wu Z."/>
            <person name="Coulson A."/>
            <person name="Vaudin M."/>
            <person name="Sulston J.E."/>
            <person name="Durbin R.M."/>
            <person name="Hubbard T."/>
            <person name="Wooster R."/>
            <person name="Dunham I."/>
            <person name="Carter N.P."/>
            <person name="McVean G."/>
            <person name="Ross M.T."/>
            <person name="Harrow J."/>
            <person name="Olson M.V."/>
            <person name="Beck S."/>
            <person name="Rogers J."/>
            <person name="Bentley D.R."/>
        </authorList>
    </citation>
    <scope>NUCLEOTIDE SEQUENCE [LARGE SCALE GENOMIC DNA]</scope>
</reference>
<reference key="9">
    <citation type="submission" date="2005-07" db="EMBL/GenBank/DDBJ databases">
        <authorList>
            <person name="Mural R.J."/>
            <person name="Istrail S."/>
            <person name="Sutton G.G."/>
            <person name="Florea L."/>
            <person name="Halpern A.L."/>
            <person name="Mobarry C.M."/>
            <person name="Lippert R."/>
            <person name="Walenz B."/>
            <person name="Shatkay H."/>
            <person name="Dew I."/>
            <person name="Miller J.R."/>
            <person name="Flanigan M.J."/>
            <person name="Edwards N.J."/>
            <person name="Bolanos R."/>
            <person name="Fasulo D."/>
            <person name="Halldorsson B.V."/>
            <person name="Hannenhalli S."/>
            <person name="Turner R."/>
            <person name="Yooseph S."/>
            <person name="Lu F."/>
            <person name="Nusskern D.R."/>
            <person name="Shue B.C."/>
            <person name="Zheng X.H."/>
            <person name="Zhong F."/>
            <person name="Delcher A.L."/>
            <person name="Huson D.H."/>
            <person name="Kravitz S.A."/>
            <person name="Mouchard L."/>
            <person name="Reinert K."/>
            <person name="Remington K.A."/>
            <person name="Clark A.G."/>
            <person name="Waterman M.S."/>
            <person name="Eichler E.E."/>
            <person name="Adams M.D."/>
            <person name="Hunkapiller M.W."/>
            <person name="Myers E.W."/>
            <person name="Venter J.C."/>
        </authorList>
    </citation>
    <scope>NUCLEOTIDE SEQUENCE [LARGE SCALE GENOMIC DNA]</scope>
</reference>
<reference key="10">
    <citation type="journal article" date="2004" name="Genome Res.">
        <title>The status, quality, and expansion of the NIH full-length cDNA project: the Mammalian Gene Collection (MGC).</title>
        <authorList>
            <consortium name="The MGC Project Team"/>
        </authorList>
    </citation>
    <scope>NUCLEOTIDE SEQUENCE [LARGE SCALE MRNA]</scope>
    <source>
        <tissue>Skin</tissue>
    </source>
</reference>
<reference key="11">
    <citation type="journal article" date="2004" name="Protein Sci.">
        <title>Signal peptide prediction based on analysis of experimentally verified cleavage sites.</title>
        <authorList>
            <person name="Zhang Z."/>
            <person name="Henzel W.J."/>
        </authorList>
    </citation>
    <scope>PROTEIN SEQUENCE OF 27-41</scope>
</reference>
<reference key="12">
    <citation type="journal article" date="2002" name="J. Biol. Chem.">
        <title>The angiopoietin-like factor cornea-derived transcript 6 is a putative morphogen for human cornea.</title>
        <authorList>
            <person name="Peek R."/>
            <person name="Kammerer R.A."/>
            <person name="Frank S."/>
            <person name="Otte-Hoeller I."/>
            <person name="Westphal J.R."/>
        </authorList>
    </citation>
    <scope>TISSUE SPECIFICITY</scope>
    <scope>SUBCELLULAR LOCATION</scope>
    <scope>SUBUNIT</scope>
</reference>
<reference key="13">
    <citation type="journal article" date="2006" name="Mol. Vis.">
        <title>Gene expression profile of human trabecular meshwork cells in response to long-term dexamethasone exposure.</title>
        <authorList>
            <person name="Rozsa F.W."/>
            <person name="Reed D.M."/>
            <person name="Scott K.M."/>
            <person name="Pawar H."/>
            <person name="Moroi S.E."/>
            <person name="Kijek T.G."/>
            <person name="Krafchak C.M."/>
            <person name="Othman M.I."/>
            <person name="Vollrath D."/>
            <person name="Elner V.M."/>
            <person name="Richards J.E."/>
        </authorList>
    </citation>
    <scope>INDUCTION</scope>
</reference>
<reference key="14">
    <citation type="journal article" date="2011" name="Genes Cells">
        <title>Evidence for a role of angiopoietin-like 7 (ANGPTL7) in extracellular matrix formation of the human trabecular meshwork: implications for glaucoma.</title>
        <authorList>
            <person name="Comes N."/>
            <person name="Buie L.K."/>
            <person name="Borras T."/>
        </authorList>
    </citation>
    <scope>FUNCTION</scope>
</reference>
<reference key="15">
    <citation type="journal article" date="2015" name="PLoS ONE">
        <title>Angiopoietin-like 7 is an anti-angiogenic protein required to prevent vascularization of the cornea.</title>
        <authorList>
            <person name="Toyono T."/>
            <person name="Usui T."/>
            <person name="Yokoo S."/>
            <person name="Taketani Y."/>
            <person name="Nakagawa S."/>
            <person name="Kuroda M."/>
            <person name="Yamagami S."/>
            <person name="Amano S."/>
        </authorList>
    </citation>
    <scope>FUNCTION</scope>
</reference>
<organism>
    <name type="scientific">Homo sapiens</name>
    <name type="common">Human</name>
    <dbReference type="NCBI Taxonomy" id="9606"/>
    <lineage>
        <taxon>Eukaryota</taxon>
        <taxon>Metazoa</taxon>
        <taxon>Chordata</taxon>
        <taxon>Craniata</taxon>
        <taxon>Vertebrata</taxon>
        <taxon>Euteleostomi</taxon>
        <taxon>Mammalia</taxon>
        <taxon>Eutheria</taxon>
        <taxon>Euarchontoglires</taxon>
        <taxon>Primates</taxon>
        <taxon>Haplorrhini</taxon>
        <taxon>Catarrhini</taxon>
        <taxon>Hominidae</taxon>
        <taxon>Homo</taxon>
    </lineage>
</organism>
<dbReference type="EMBL" id="Y16132">
    <property type="protein sequence ID" value="CAA76078.1"/>
    <property type="molecule type" value="mRNA"/>
</dbReference>
<dbReference type="EMBL" id="AJ300188">
    <property type="protein sequence ID" value="CAC15571.1"/>
    <property type="molecule type" value="Genomic_DNA"/>
</dbReference>
<dbReference type="EMBL" id="AY358301">
    <property type="protein sequence ID" value="AAQ88668.1"/>
    <property type="molecule type" value="mRNA"/>
</dbReference>
<dbReference type="EMBL" id="BT009802">
    <property type="protein sequence ID" value="AAP88804.1"/>
    <property type="molecule type" value="mRNA"/>
</dbReference>
<dbReference type="EMBL" id="AK313716">
    <property type="protein sequence ID" value="BAG36459.1"/>
    <property type="molecule type" value="mRNA"/>
</dbReference>
<dbReference type="EMBL" id="DQ012507">
    <property type="protein sequence ID" value="AAY22173.1"/>
    <property type="molecule type" value="Genomic_DNA"/>
</dbReference>
<dbReference type="EMBL" id="AB593026">
    <property type="protein sequence ID" value="BAJ83980.1"/>
    <property type="molecule type" value="mRNA"/>
</dbReference>
<dbReference type="EMBL" id="AB593027">
    <property type="protein sequence ID" value="BAJ83981.1"/>
    <property type="molecule type" value="mRNA"/>
</dbReference>
<dbReference type="EMBL" id="AL049653">
    <property type="status" value="NOT_ANNOTATED_CDS"/>
    <property type="molecule type" value="Genomic_DNA"/>
</dbReference>
<dbReference type="EMBL" id="AL391561">
    <property type="status" value="NOT_ANNOTATED_CDS"/>
    <property type="molecule type" value="Genomic_DNA"/>
</dbReference>
<dbReference type="EMBL" id="CH471130">
    <property type="protein sequence ID" value="EAW71685.1"/>
    <property type="molecule type" value="Genomic_DNA"/>
</dbReference>
<dbReference type="EMBL" id="BC001881">
    <property type="protein sequence ID" value="AAH01881.1"/>
    <property type="molecule type" value="mRNA"/>
</dbReference>
<dbReference type="CCDS" id="CCDS128.1"/>
<dbReference type="RefSeq" id="NP_066969.1">
    <property type="nucleotide sequence ID" value="NM_021146.4"/>
</dbReference>
<dbReference type="SMR" id="O43827"/>
<dbReference type="BioGRID" id="115513">
    <property type="interactions" value="27"/>
</dbReference>
<dbReference type="FunCoup" id="O43827">
    <property type="interactions" value="58"/>
</dbReference>
<dbReference type="IntAct" id="O43827">
    <property type="interactions" value="21"/>
</dbReference>
<dbReference type="STRING" id="9606.ENSP00000366015"/>
<dbReference type="GlyCosmos" id="O43827">
    <property type="glycosylation" value="3 sites, No reported glycans"/>
</dbReference>
<dbReference type="GlyGen" id="O43827">
    <property type="glycosylation" value="4 sites"/>
</dbReference>
<dbReference type="iPTMnet" id="O43827"/>
<dbReference type="PhosphoSitePlus" id="O43827"/>
<dbReference type="BioMuta" id="ANGPTL7"/>
<dbReference type="MassIVE" id="O43827"/>
<dbReference type="PaxDb" id="9606-ENSP00000366015"/>
<dbReference type="PeptideAtlas" id="O43827"/>
<dbReference type="ProteomicsDB" id="49194"/>
<dbReference type="Antibodypedia" id="28091">
    <property type="antibodies" value="418 antibodies from 31 providers"/>
</dbReference>
<dbReference type="DNASU" id="10218"/>
<dbReference type="Ensembl" id="ENST00000376819.4">
    <property type="protein sequence ID" value="ENSP00000366015.3"/>
    <property type="gene ID" value="ENSG00000171819.5"/>
</dbReference>
<dbReference type="GeneID" id="10218"/>
<dbReference type="KEGG" id="hsa:10218"/>
<dbReference type="MANE-Select" id="ENST00000376819.4">
    <property type="protein sequence ID" value="ENSP00000366015.3"/>
    <property type="RefSeq nucleotide sequence ID" value="NM_021146.4"/>
    <property type="RefSeq protein sequence ID" value="NP_066969.1"/>
</dbReference>
<dbReference type="UCSC" id="uc001ase.5">
    <property type="organism name" value="human"/>
</dbReference>
<dbReference type="AGR" id="HGNC:24078"/>
<dbReference type="CTD" id="10218"/>
<dbReference type="DisGeNET" id="10218"/>
<dbReference type="GeneCards" id="ANGPTL7"/>
<dbReference type="HGNC" id="HGNC:24078">
    <property type="gene designation" value="ANGPTL7"/>
</dbReference>
<dbReference type="HPA" id="ENSG00000171819">
    <property type="expression patterns" value="Tissue enhanced (adipose)"/>
</dbReference>
<dbReference type="MIM" id="618517">
    <property type="type" value="gene"/>
</dbReference>
<dbReference type="neXtProt" id="NX_O43827"/>
<dbReference type="OpenTargets" id="ENSG00000171819"/>
<dbReference type="PharmGKB" id="PA134959516"/>
<dbReference type="VEuPathDB" id="HostDB:ENSG00000171819"/>
<dbReference type="eggNOG" id="KOG2579">
    <property type="taxonomic scope" value="Eukaryota"/>
</dbReference>
<dbReference type="GeneTree" id="ENSGT00940000157064"/>
<dbReference type="HOGENOM" id="CLU_038628_1_3_1"/>
<dbReference type="InParanoid" id="O43827"/>
<dbReference type="OMA" id="GWHGANY"/>
<dbReference type="OrthoDB" id="9860756at2759"/>
<dbReference type="PAN-GO" id="O43827">
    <property type="GO annotations" value="3 GO annotations based on evolutionary models"/>
</dbReference>
<dbReference type="PhylomeDB" id="O43827"/>
<dbReference type="TreeFam" id="TF329953"/>
<dbReference type="PathwayCommons" id="O43827"/>
<dbReference type="SignaLink" id="O43827"/>
<dbReference type="BioGRID-ORCS" id="10218">
    <property type="hits" value="5 hits in 1137 CRISPR screens"/>
</dbReference>
<dbReference type="GeneWiki" id="ANGPTL7"/>
<dbReference type="GenomeRNAi" id="10218"/>
<dbReference type="Pharos" id="O43827">
    <property type="development level" value="Tbio"/>
</dbReference>
<dbReference type="PRO" id="PR:O43827"/>
<dbReference type="Proteomes" id="UP000005640">
    <property type="component" value="Chromosome 1"/>
</dbReference>
<dbReference type="RNAct" id="O43827">
    <property type="molecule type" value="protein"/>
</dbReference>
<dbReference type="Bgee" id="ENSG00000171819">
    <property type="expression patterns" value="Expressed in calcaneal tendon and 103 other cell types or tissues"/>
</dbReference>
<dbReference type="GO" id="GO:0062023">
    <property type="term" value="C:collagen-containing extracellular matrix"/>
    <property type="evidence" value="ECO:0000318"/>
    <property type="project" value="GO_Central"/>
</dbReference>
<dbReference type="GO" id="GO:0005576">
    <property type="term" value="C:extracellular region"/>
    <property type="evidence" value="ECO:0000314"/>
    <property type="project" value="UniProtKB"/>
</dbReference>
<dbReference type="GO" id="GO:0005615">
    <property type="term" value="C:extracellular space"/>
    <property type="evidence" value="ECO:0000318"/>
    <property type="project" value="GO_Central"/>
</dbReference>
<dbReference type="GO" id="GO:0042802">
    <property type="term" value="F:identical protein binding"/>
    <property type="evidence" value="ECO:0000314"/>
    <property type="project" value="UniProtKB"/>
</dbReference>
<dbReference type="GO" id="GO:0007596">
    <property type="term" value="P:blood coagulation"/>
    <property type="evidence" value="ECO:0007669"/>
    <property type="project" value="InterPro"/>
</dbReference>
<dbReference type="GO" id="GO:1901346">
    <property type="term" value="P:negative regulation of vasculature development involved in avascular cornea development in camera-type eye"/>
    <property type="evidence" value="ECO:0000315"/>
    <property type="project" value="UniProtKB"/>
</dbReference>
<dbReference type="GO" id="GO:1903053">
    <property type="term" value="P:regulation of extracellular matrix organization"/>
    <property type="evidence" value="ECO:0000315"/>
    <property type="project" value="UniProtKB"/>
</dbReference>
<dbReference type="GO" id="GO:0006979">
    <property type="term" value="P:response to oxidative stress"/>
    <property type="evidence" value="ECO:0000304"/>
    <property type="project" value="ProtInc"/>
</dbReference>
<dbReference type="CDD" id="cd00087">
    <property type="entry name" value="FReD"/>
    <property type="match status" value="1"/>
</dbReference>
<dbReference type="FunFam" id="3.90.215.10:FF:000001">
    <property type="entry name" value="Tenascin isoform 1"/>
    <property type="match status" value="1"/>
</dbReference>
<dbReference type="Gene3D" id="3.90.215.10">
    <property type="entry name" value="Gamma Fibrinogen, chain A, domain 1"/>
    <property type="match status" value="1"/>
</dbReference>
<dbReference type="InterPro" id="IPR037579">
    <property type="entry name" value="FIB_ANG-like"/>
</dbReference>
<dbReference type="InterPro" id="IPR036056">
    <property type="entry name" value="Fibrinogen-like_C"/>
</dbReference>
<dbReference type="InterPro" id="IPR014716">
    <property type="entry name" value="Fibrinogen_a/b/g_C_1"/>
</dbReference>
<dbReference type="InterPro" id="IPR002181">
    <property type="entry name" value="Fibrinogen_a/b/g_C_dom"/>
</dbReference>
<dbReference type="NCBIfam" id="NF040941">
    <property type="entry name" value="GGGWT_bact"/>
    <property type="match status" value="1"/>
</dbReference>
<dbReference type="PANTHER" id="PTHR47221">
    <property type="entry name" value="FIBRINOGEN ALPHA CHAIN"/>
    <property type="match status" value="1"/>
</dbReference>
<dbReference type="PANTHER" id="PTHR47221:SF6">
    <property type="entry name" value="FIBRINOGEN ALPHA CHAIN"/>
    <property type="match status" value="1"/>
</dbReference>
<dbReference type="Pfam" id="PF00147">
    <property type="entry name" value="Fibrinogen_C"/>
    <property type="match status" value="1"/>
</dbReference>
<dbReference type="SMART" id="SM00186">
    <property type="entry name" value="FBG"/>
    <property type="match status" value="1"/>
</dbReference>
<dbReference type="SUPFAM" id="SSF56496">
    <property type="entry name" value="Fibrinogen C-terminal domain-like"/>
    <property type="match status" value="1"/>
</dbReference>
<dbReference type="PROSITE" id="PS51406">
    <property type="entry name" value="FIBRINOGEN_C_2"/>
    <property type="match status" value="1"/>
</dbReference>
<name>ANGL7_HUMAN</name>
<keyword id="KW-0175">Coiled coil</keyword>
<keyword id="KW-0903">Direct protein sequencing</keyword>
<keyword id="KW-1015">Disulfide bond</keyword>
<keyword id="KW-0325">Glycoprotein</keyword>
<keyword id="KW-1267">Proteomics identification</keyword>
<keyword id="KW-1185">Reference proteome</keyword>
<keyword id="KW-0964">Secreted</keyword>
<keyword id="KW-0732">Signal</keyword>
<sequence>MLKKPLSAVTWLCIFIVAFVSHPAWLQKLSKHKTPAQPQLKAANCCEEVKELKAQVANLSSLLSELNKKQERDWVSVVMQVMELESNSKRMESRLTDAESKYSEMNNQIDIMQLQAAQTVTQTSADAIYDCSSLYQKNYRISGVYKLPPDDFLGSPELEVFCDMETSGGGWTIIQRRKSGLVSFYRDWKQYKQGFGSIRGDFWLGNEHIHRLSRQPTRLRVEMEDWEGNLRYAEYSHFVLGNELNSYRLFLGNYTGNVGNDALQYHNNTAFSTKDKDNDNCLDKCAQLRKGGYWYNCCTDSNLNGVYYRLGEHNKHLDGITWYGWHGSTYSLKRVEMKIRPEDFKP</sequence>
<gene>
    <name type="primary">ANGPTL7</name>
    <name type="synonym">CDT6</name>
    <name type="ORF">UNQ313/PRO356</name>
</gene>
<evidence type="ECO:0000255" key="1"/>
<evidence type="ECO:0000255" key="2">
    <source>
        <dbReference type="PROSITE-ProRule" id="PRU00739"/>
    </source>
</evidence>
<evidence type="ECO:0000269" key="3">
    <source>
    </source>
</evidence>
<evidence type="ECO:0000269" key="4">
    <source>
    </source>
</evidence>
<evidence type="ECO:0000269" key="5">
    <source>
    </source>
</evidence>
<evidence type="ECO:0000269" key="6">
    <source>
    </source>
</evidence>
<evidence type="ECO:0000269" key="7">
    <source>
    </source>
</evidence>
<evidence type="ECO:0000269" key="8">
    <source>
    </source>
</evidence>
<evidence type="ECO:0000269" key="9">
    <source ref="6"/>
</evidence>
<protein>
    <recommendedName>
        <fullName>Angiopoietin-related protein 7</fullName>
    </recommendedName>
    <alternativeName>
        <fullName>Angiopoietin-like factor</fullName>
    </alternativeName>
    <alternativeName>
        <fullName>Angiopoietin-like protein 7</fullName>
    </alternativeName>
    <alternativeName>
        <fullName>Cornea-derived transcript 6 protein</fullName>
    </alternativeName>
</protein>
<comment type="function">
    <text evidence="6 7">Has a role in the formation and organization of the extracellular matrix. In the eye, it functions as a mediator of dexamethasone-induced matrix deposition in the trabecular meshwork, the tissue responsible for the outflow of the ocular aqueous humor and for the maintenance of intraocular pressure (PubMed:21199193). Is a negative regulator of angiogenesis in the cornea, and plays a major role in maintaining corneal avascularity and transparency (PubMed:25622036).</text>
</comment>
<comment type="subunit">
    <text evidence="3">Homotetramer; disulfide-linked.</text>
</comment>
<comment type="interaction">
    <interactant intactId="EBI-12698369">
        <id>O43827</id>
    </interactant>
    <interactant intactId="EBI-77797">
        <id>P35609</id>
        <label>ACTN2</label>
    </interactant>
    <organismsDiffer>false</organismsDiffer>
    <experiments>3</experiments>
</comment>
<comment type="subcellular location">
    <subcellularLocation>
        <location evidence="3">Secreted</location>
    </subcellularLocation>
</comment>
<comment type="tissue specificity">
    <text evidence="3 8">Highly expressed in the cornea (at protein level) (PubMed:11682471). Expression is restricted to the stromal layer (PubMed:11682471). Also detected at the junction between the corneal stromal layer and the conjuctiva. Not detected in the sclera (PubMed:11682471).</text>
</comment>
<comment type="induction">
    <text evidence="5">Expression is up-regulated by dexamethasone.</text>
</comment>